<sequence>METVAAAITKNNGYESFCVTNAKNNNMKVNSADPLNWGVAAEAMKGSHLDEVKRMVEEYRKPVVRLGGETLTISQVAAIAAHDHGVKVELSESARAGVKASSDWVMESMNKGTDSYGVTTGFGATSHRRTKQGGALQKELIRFLNAGIFGNGTESSHTLPHTATRAAMLVRINTLLQGYSGIRFEILEAITKLINNNVTPCLLRGTITASGDLVPLSYIAGLLTGRPNSKAHGTSGEILNAKEAFQSAEINDGFFELQPKEGLALVNGTAVGSGLASIVLFEANILAVLSEVLSAIFAEVMQGKPEFTDHLTHKLKHHPGQIEAAAIMEHILDGSAYVKAAKKLHEMDPLQKPKQDRYALRTSPQWLGPLIEVIRFSTKSIEREINSVNDNPLIDVSRNKALHGGNFQGTPIGVSMDNTRLALASIGKLLFAQFSELVNDFYNNGLPSNLSASRNPSLDYGFKGSEIAMASYCSELQYLANPVTTHVQSAEQHNQDVNSLGLISSRKTYEAIEILQLMSSTFLIALCQAVDLRHLEENLKNSVKNIVSQVAKRTLTTGVNGELHPSRFCEKDLLRVVDREHVFAYIDDPCSATYPLMQKLRQVLVDHALVNGESEKNLNTSIFQKIATFEDELKTLLPKEVESTRAAYESGNPTVPNKINGCRSYPLYRFVRQELGTGLLTGEKVISPGEECDKLFTAICQGKIIDPLLQCLGDWNGAPLPIS</sequence>
<evidence type="ECO:0000250" key="1">
    <source>
        <dbReference type="UniProtKB" id="P11544"/>
    </source>
</evidence>
<evidence type="ECO:0000250" key="2">
    <source>
        <dbReference type="UniProtKB" id="P24481"/>
    </source>
</evidence>
<evidence type="ECO:0000250" key="3">
    <source>
        <dbReference type="UniProtKB" id="Q68G84"/>
    </source>
</evidence>
<evidence type="ECO:0000255" key="4">
    <source>
        <dbReference type="PROSITE-ProRule" id="PRU10122"/>
    </source>
</evidence>
<evidence type="ECO:0000305" key="5"/>
<dbReference type="EC" id="4.3.1.24" evidence="2"/>
<dbReference type="EMBL" id="D10001">
    <property type="protein sequence ID" value="BAA00885.1"/>
    <property type="molecule type" value="mRNA"/>
</dbReference>
<dbReference type="EMBL" id="D10002">
    <property type="protein sequence ID" value="BAA00886.1"/>
    <property type="molecule type" value="Genomic_DNA"/>
</dbReference>
<dbReference type="PIR" id="S25303">
    <property type="entry name" value="S25303"/>
</dbReference>
<dbReference type="SMR" id="Q01861"/>
<dbReference type="UniPathway" id="UPA00713">
    <property type="reaction ID" value="UER00725"/>
</dbReference>
<dbReference type="GO" id="GO:0005737">
    <property type="term" value="C:cytoplasm"/>
    <property type="evidence" value="ECO:0007669"/>
    <property type="project" value="UniProtKB-SubCell"/>
</dbReference>
<dbReference type="GO" id="GO:0045548">
    <property type="term" value="F:phenylalanine ammonia-lyase activity"/>
    <property type="evidence" value="ECO:0007669"/>
    <property type="project" value="UniProtKB-EC"/>
</dbReference>
<dbReference type="GO" id="GO:0009800">
    <property type="term" value="P:cinnamic acid biosynthetic process"/>
    <property type="evidence" value="ECO:0007669"/>
    <property type="project" value="UniProtKB-UniPathway"/>
</dbReference>
<dbReference type="GO" id="GO:0006559">
    <property type="term" value="P:L-phenylalanine catabolic process"/>
    <property type="evidence" value="ECO:0007669"/>
    <property type="project" value="UniProtKB-KW"/>
</dbReference>
<dbReference type="CDD" id="cd00332">
    <property type="entry name" value="PAL-HAL"/>
    <property type="match status" value="1"/>
</dbReference>
<dbReference type="FunFam" id="1.10.274.20:FF:000001">
    <property type="entry name" value="Phenylalanine ammonia-lyase"/>
    <property type="match status" value="1"/>
</dbReference>
<dbReference type="FunFam" id="1.10.275.10:FF:000009">
    <property type="entry name" value="Phenylalanine ammonia-lyase"/>
    <property type="match status" value="1"/>
</dbReference>
<dbReference type="FunFam" id="1.20.200.10:FF:000009">
    <property type="entry name" value="Phenylalanine ammonia-lyase"/>
    <property type="match status" value="1"/>
</dbReference>
<dbReference type="Gene3D" id="1.20.200.10">
    <property type="entry name" value="Fumarase/aspartase (Central domain)"/>
    <property type="match status" value="1"/>
</dbReference>
<dbReference type="Gene3D" id="1.10.275.10">
    <property type="entry name" value="Fumarase/aspartase (N-terminal domain)"/>
    <property type="match status" value="1"/>
</dbReference>
<dbReference type="Gene3D" id="1.10.274.20">
    <property type="entry name" value="Phenylalanine ammonia-lyase 1, domain 3"/>
    <property type="match status" value="1"/>
</dbReference>
<dbReference type="InterPro" id="IPR001106">
    <property type="entry name" value="Aromatic_Lyase"/>
</dbReference>
<dbReference type="InterPro" id="IPR024083">
    <property type="entry name" value="Fumarase/histidase_N"/>
</dbReference>
<dbReference type="InterPro" id="IPR008948">
    <property type="entry name" value="L-Aspartase-like"/>
</dbReference>
<dbReference type="InterPro" id="IPR022313">
    <property type="entry name" value="Phe/His_NH3-lyase_AS"/>
</dbReference>
<dbReference type="InterPro" id="IPR005922">
    <property type="entry name" value="Phe_NH3-lyase"/>
</dbReference>
<dbReference type="InterPro" id="IPR023144">
    <property type="entry name" value="Phe_NH3-lyase_shielding_dom_sf"/>
</dbReference>
<dbReference type="NCBIfam" id="TIGR01226">
    <property type="entry name" value="phe_am_lyase"/>
    <property type="match status" value="1"/>
</dbReference>
<dbReference type="PANTHER" id="PTHR10362">
    <property type="entry name" value="HISTIDINE AMMONIA-LYASE"/>
    <property type="match status" value="1"/>
</dbReference>
<dbReference type="Pfam" id="PF00221">
    <property type="entry name" value="Lyase_aromatic"/>
    <property type="match status" value="1"/>
</dbReference>
<dbReference type="SUPFAM" id="SSF48557">
    <property type="entry name" value="L-aspartase-like"/>
    <property type="match status" value="1"/>
</dbReference>
<dbReference type="PROSITE" id="PS00488">
    <property type="entry name" value="PAL_HISTIDASE"/>
    <property type="match status" value="1"/>
</dbReference>
<organism>
    <name type="scientific">Pisum sativum</name>
    <name type="common">Garden pea</name>
    <name type="synonym">Lathyrus oleraceus</name>
    <dbReference type="NCBI Taxonomy" id="3888"/>
    <lineage>
        <taxon>Eukaryota</taxon>
        <taxon>Viridiplantae</taxon>
        <taxon>Streptophyta</taxon>
        <taxon>Embryophyta</taxon>
        <taxon>Tracheophyta</taxon>
        <taxon>Spermatophyta</taxon>
        <taxon>Magnoliopsida</taxon>
        <taxon>eudicotyledons</taxon>
        <taxon>Gunneridae</taxon>
        <taxon>Pentapetalae</taxon>
        <taxon>rosids</taxon>
        <taxon>fabids</taxon>
        <taxon>Fabales</taxon>
        <taxon>Fabaceae</taxon>
        <taxon>Papilionoideae</taxon>
        <taxon>50 kb inversion clade</taxon>
        <taxon>NPAAA clade</taxon>
        <taxon>Hologalegina</taxon>
        <taxon>IRL clade</taxon>
        <taxon>Fabeae</taxon>
        <taxon>Pisum</taxon>
    </lineage>
</organism>
<proteinExistence type="evidence at transcript level"/>
<protein>
    <recommendedName>
        <fullName>Phenylalanine ammonia-lyase 1</fullName>
        <ecNumber evidence="2">4.3.1.24</ecNumber>
    </recommendedName>
</protein>
<keyword id="KW-0963">Cytoplasm</keyword>
<keyword id="KW-0456">Lyase</keyword>
<keyword id="KW-0585">Phenylalanine catabolism</keyword>
<keyword id="KW-0587">Phenylpropanoid metabolism</keyword>
<feature type="chain" id="PRO_0000215403" description="Phenylalanine ammonia-lyase 1">
    <location>
        <begin position="1"/>
        <end position="723"/>
    </location>
</feature>
<feature type="active site" description="Proton donor/acceptor" evidence="3">
    <location>
        <position position="116"/>
    </location>
</feature>
<feature type="binding site" evidence="3">
    <location>
        <position position="267"/>
    </location>
    <ligand>
        <name>(E)-cinnamate</name>
        <dbReference type="ChEBI" id="CHEBI:15669"/>
    </ligand>
</feature>
<feature type="binding site" evidence="3">
    <location>
        <position position="355"/>
    </location>
    <ligand>
        <name>(E)-cinnamate</name>
        <dbReference type="ChEBI" id="CHEBI:15669"/>
    </ligand>
</feature>
<feature type="binding site" evidence="3">
    <location>
        <position position="361"/>
    </location>
    <ligand>
        <name>(E)-cinnamate</name>
        <dbReference type="ChEBI" id="CHEBI:15669"/>
    </ligand>
</feature>
<feature type="binding site" evidence="3">
    <location>
        <position position="391"/>
    </location>
    <ligand>
        <name>(E)-cinnamate</name>
        <dbReference type="ChEBI" id="CHEBI:15669"/>
    </ligand>
</feature>
<feature type="binding site" evidence="1">
    <location>
        <position position="463"/>
    </location>
    <ligand>
        <name>(E)-cinnamate</name>
        <dbReference type="ChEBI" id="CHEBI:15669"/>
    </ligand>
</feature>
<feature type="binding site" evidence="1">
    <location>
        <position position="491"/>
    </location>
    <ligand>
        <name>(E)-cinnamate</name>
        <dbReference type="ChEBI" id="CHEBI:15669"/>
    </ligand>
</feature>
<feature type="binding site" evidence="3">
    <location>
        <position position="494"/>
    </location>
    <ligand>
        <name>(E)-cinnamate</name>
        <dbReference type="ChEBI" id="CHEBI:15669"/>
    </ligand>
</feature>
<feature type="modified residue" description="2,3-didehydroalanine (Ser)" evidence="4">
    <location>
        <position position="210"/>
    </location>
</feature>
<feature type="cross-link" description="5-imidazolinone (Ala-Gly)" evidence="3">
    <location>
        <begin position="209"/>
        <end position="211"/>
    </location>
</feature>
<comment type="function">
    <text evidence="2">This is a key enzyme of plant metabolism catalyzing the first reaction in the biosynthesis from L-phenylalanine of a wide variety of natural products based on the phenylpropane skeleton.</text>
</comment>
<comment type="catalytic activity">
    <reaction evidence="2">
        <text>L-phenylalanine = (E)-cinnamate + NH4(+)</text>
        <dbReference type="Rhea" id="RHEA:21384"/>
        <dbReference type="ChEBI" id="CHEBI:15669"/>
        <dbReference type="ChEBI" id="CHEBI:28938"/>
        <dbReference type="ChEBI" id="CHEBI:58095"/>
        <dbReference type="EC" id="4.3.1.24"/>
    </reaction>
</comment>
<comment type="pathway">
    <text evidence="5">Phenylpropanoid metabolism; trans-cinnamate biosynthesis; trans-cinnamate from L-phenylalanine: step 1/1.</text>
</comment>
<comment type="subunit">
    <text evidence="2">Homotetramer.</text>
</comment>
<comment type="subcellular location">
    <subcellularLocation>
        <location evidence="5">Cytoplasm</location>
    </subcellularLocation>
</comment>
<comment type="tissue specificity">
    <text>Present at high levels in roots, with slightly higher amounts in roots with nodules than those without, and at moderate levels in stems. Low levels also present in lower leaves.</text>
</comment>
<comment type="PTM">
    <text evidence="3">Contains an active site 4-methylidene-imidazol-5-one (MIO), which is formed autocatalytically by cyclization and dehydration of residues Ala-Ser-Gly.</text>
</comment>
<comment type="similarity">
    <text evidence="5">Belongs to the PAL/histidase family.</text>
</comment>
<accession>Q01861</accession>
<name>PAL1_PEA</name>
<gene>
    <name type="primary">PAL1</name>
</gene>
<reference key="1">
    <citation type="journal article" date="1992" name="Plant Mol. Biol.">
        <title>Molecular cloning of phenylalanine ammonia-lyase cDNA from Pisum sativum.</title>
        <authorList>
            <person name="Kawamata S."/>
            <person name="Yamada T."/>
            <person name="Tanaka Y."/>
            <person name="Sriprasertsak P."/>
            <person name="Kato H."/>
            <person name="Ichinose Y."/>
            <person name="Kato H."/>
            <person name="Shiraishi T."/>
            <person name="Oku H."/>
        </authorList>
    </citation>
    <scope>NUCLEOTIDE SEQUENCE [MRNA]</scope>
</reference>
<reference key="2">
    <citation type="journal article" date="1992" name="Plant Cell Physiol.">
        <title>Phenylalanine ammonia-lyase genes from Pisum sativum: structure, organ-specific expression and regulation by fungal elicitor and suppressor.</title>
        <authorList>
            <person name="Yamada T."/>
            <person name="Tanaka Y."/>
            <person name="Sriprasertsak P."/>
            <person name="Kato H."/>
            <person name="Hashimoto T."/>
            <person name="Kawamata S."/>
            <person name="Ichinose Y."/>
            <person name="Kato H."/>
            <person name="Shiraishi T."/>
            <person name="Oku H."/>
        </authorList>
    </citation>
    <scope>NUCLEOTIDE SEQUENCE [GENOMIC DNA]</scope>
    <source>
        <strain>cv. Midoriusui</strain>
        <tissue>Epicotyl</tissue>
    </source>
</reference>